<organism>
    <name type="scientific">Phytophthora infestans</name>
    <name type="common">Potato late blight agent</name>
    <name type="synonym">Botrytis infestans</name>
    <dbReference type="NCBI Taxonomy" id="4787"/>
    <lineage>
        <taxon>Eukaryota</taxon>
        <taxon>Sar</taxon>
        <taxon>Stramenopiles</taxon>
        <taxon>Oomycota</taxon>
        <taxon>Peronosporales</taxon>
        <taxon>Peronosporaceae</taxon>
        <taxon>Phytophthora</taxon>
    </lineage>
</organism>
<name>TIM50_PHYIN</name>
<sequence length="409" mass="45265">MMLKLVLRAQRGMRAFAGIGATRKLMLAAEASAPSSVAEASSIFAKVGRDIPLKVVPRAERRAARKAAKHSADAATGHKVVRTSSLPARISFALLAGSISGSIVWNFVLDDGIKSRVKETLGATFLGDIYAIIAKKVEETVKPFTDPSRQKLLPDWPIPQVPADTPTVPVLVLDLEDTLVHSEWSRKHGWRHAKRPGVDEFLETLCQYYEIVIFSQNYGAEEIVQKLDPKQCALHILSRDATRYLNGAHVKDLSNLNRDLRQVVILDDDPAAYQLQPENAIPVTPFTNGRDRDDHELKDLIPFLKALASERVPDFRQVIGEFRDEDGVVRDLATKYGARVHQLEMQKEQKKKKGFGGFVRGRLSHHPASPTGGVAASGFSSGPHVLKRWTLLDSSAYVVAPRCIKEKCM</sequence>
<evidence type="ECO:0000250" key="1"/>
<evidence type="ECO:0000255" key="2"/>
<evidence type="ECO:0000255" key="3">
    <source>
        <dbReference type="PROSITE-ProRule" id="PRU00336"/>
    </source>
</evidence>
<evidence type="ECO:0000269" key="4">
    <source>
    </source>
</evidence>
<evidence type="ECO:0000305" key="5"/>
<reference key="1">
    <citation type="journal article" date="2005" name="Fungal Genet. Biol.">
        <title>A cluster of NIF transcriptional regulators with divergent patterns of spore-specific expression in Phytophthora infestans.</title>
        <authorList>
            <person name="Tani S."/>
            <person name="Kim K.S."/>
            <person name="Judelson H.S."/>
        </authorList>
    </citation>
    <scope>NUCLEOTIDE SEQUENCE [MRNA]</scope>
    <scope>DEVELOPMENTAL STAGE</scope>
</reference>
<protein>
    <recommendedName>
        <fullName>Mitochondrial import inner membrane translocase subunit TIM50</fullName>
    </recommendedName>
    <alternativeName>
        <fullName>NIF domain protein 3</fullName>
    </alternativeName>
</protein>
<dbReference type="EMBL" id="AY751575">
    <property type="protein sequence ID" value="AAV63943.1"/>
    <property type="molecule type" value="mRNA"/>
</dbReference>
<dbReference type="SMR" id="Q5S7T7"/>
<dbReference type="VEuPathDB" id="FungiDB:PITG_05927"/>
<dbReference type="GO" id="GO:0005743">
    <property type="term" value="C:mitochondrial inner membrane"/>
    <property type="evidence" value="ECO:0007669"/>
    <property type="project" value="UniProtKB-SubCell"/>
</dbReference>
<dbReference type="GO" id="GO:0015031">
    <property type="term" value="P:protein transport"/>
    <property type="evidence" value="ECO:0007669"/>
    <property type="project" value="UniProtKB-KW"/>
</dbReference>
<dbReference type="CDD" id="cd07521">
    <property type="entry name" value="HAD_FCP1-like"/>
    <property type="match status" value="1"/>
</dbReference>
<dbReference type="FunFam" id="3.40.50.1000:FF:000194">
    <property type="entry name" value="Mitochondrial import inner membrane translocase subunit TIM50"/>
    <property type="match status" value="1"/>
</dbReference>
<dbReference type="Gene3D" id="3.40.50.1000">
    <property type="entry name" value="HAD superfamily/HAD-like"/>
    <property type="match status" value="1"/>
</dbReference>
<dbReference type="InterPro" id="IPR004274">
    <property type="entry name" value="FCP1_dom"/>
</dbReference>
<dbReference type="InterPro" id="IPR036412">
    <property type="entry name" value="HAD-like_sf"/>
</dbReference>
<dbReference type="InterPro" id="IPR023214">
    <property type="entry name" value="HAD_sf"/>
</dbReference>
<dbReference type="InterPro" id="IPR050365">
    <property type="entry name" value="TIM50"/>
</dbReference>
<dbReference type="PANTHER" id="PTHR12210">
    <property type="entry name" value="DULLARD PROTEIN PHOSPHATASE"/>
    <property type="match status" value="1"/>
</dbReference>
<dbReference type="Pfam" id="PF03031">
    <property type="entry name" value="NIF"/>
    <property type="match status" value="1"/>
</dbReference>
<dbReference type="SMART" id="SM00577">
    <property type="entry name" value="CPDc"/>
    <property type="match status" value="1"/>
</dbReference>
<dbReference type="SUPFAM" id="SSF56784">
    <property type="entry name" value="HAD-like"/>
    <property type="match status" value="1"/>
</dbReference>
<dbReference type="PROSITE" id="PS50969">
    <property type="entry name" value="FCP1"/>
    <property type="match status" value="1"/>
</dbReference>
<proteinExistence type="evidence at transcript level"/>
<keyword id="KW-0472">Membrane</keyword>
<keyword id="KW-0496">Mitochondrion</keyword>
<keyword id="KW-0999">Mitochondrion inner membrane</keyword>
<keyword id="KW-0653">Protein transport</keyword>
<keyword id="KW-0809">Transit peptide</keyword>
<keyword id="KW-0811">Translocation</keyword>
<keyword id="KW-0812">Transmembrane</keyword>
<keyword id="KW-1133">Transmembrane helix</keyword>
<keyword id="KW-0813">Transport</keyword>
<comment type="function">
    <text evidence="1">Essential component of the TIM23 complex, a complex that mediates the translocation of transit peptide-containing proteins across the mitochondrial inner membrane. Required to direct preproteins in transit and direct them to the channel protein TIM23, and possibly facilitates transfer of the translocating proteins from the TOM complex to the TIM23 complex (By similarity).</text>
</comment>
<comment type="subunit">
    <text evidence="1">Component of the TIM23 complex, at least composed of TIM23, TIM17 and TIM50. Interacts with preproteins in transit (By similarity).</text>
</comment>
<comment type="subcellular location">
    <subcellularLocation>
        <location evidence="1">Mitochondrion inner membrane</location>
        <topology evidence="1">Single-pass membrane protein</topology>
    </subcellularLocation>
</comment>
<comment type="developmental stage">
    <text evidence="4">Expressed during zoosporogenesis.</text>
</comment>
<comment type="similarity">
    <text evidence="5">Belongs to the TIM50 family.</text>
</comment>
<accession>Q5S7T7</accession>
<gene>
    <name type="primary">TIM50</name>
    <name type="synonym">NIFH3</name>
</gene>
<feature type="transit peptide" description="Mitochondrion" evidence="2">
    <location>
        <begin position="1"/>
        <end position="63"/>
    </location>
</feature>
<feature type="chain" id="PRO_0000043135" description="Mitochondrial import inner membrane translocase subunit TIM50">
    <location>
        <begin position="64"/>
        <end position="409"/>
    </location>
</feature>
<feature type="topological domain" description="Mitochondrial matrix" evidence="2">
    <location>
        <begin position="64"/>
        <end position="89"/>
    </location>
</feature>
<feature type="transmembrane region" description="Helical" evidence="2">
    <location>
        <begin position="90"/>
        <end position="109"/>
    </location>
</feature>
<feature type="topological domain" description="Mitochondrial intermembrane" evidence="2">
    <location>
        <begin position="110"/>
        <end position="409"/>
    </location>
</feature>
<feature type="domain" description="FCP1 homology" evidence="3">
    <location>
        <begin position="164"/>
        <end position="307"/>
    </location>
</feature>